<accession>Q12UP9</accession>
<evidence type="ECO:0000255" key="1">
    <source>
        <dbReference type="HAMAP-Rule" id="MF_01318"/>
    </source>
</evidence>
<evidence type="ECO:0000305" key="2"/>
<reference key="1">
    <citation type="journal article" date="2009" name="ISME J.">
        <title>The genome sequence of the psychrophilic archaeon, Methanococcoides burtonii: the role of genome evolution in cold adaptation.</title>
        <authorList>
            <person name="Allen M.A."/>
            <person name="Lauro F.M."/>
            <person name="Williams T.J."/>
            <person name="Burg D."/>
            <person name="Siddiqui K.S."/>
            <person name="De Francisci D."/>
            <person name="Chong K.W."/>
            <person name="Pilak O."/>
            <person name="Chew H.H."/>
            <person name="De Maere M.Z."/>
            <person name="Ting L."/>
            <person name="Katrib M."/>
            <person name="Ng C."/>
            <person name="Sowers K.R."/>
            <person name="Galperin M.Y."/>
            <person name="Anderson I.J."/>
            <person name="Ivanova N."/>
            <person name="Dalin E."/>
            <person name="Martinez M."/>
            <person name="Lapidus A."/>
            <person name="Hauser L."/>
            <person name="Land M."/>
            <person name="Thomas T."/>
            <person name="Cavicchioli R."/>
        </authorList>
    </citation>
    <scope>NUCLEOTIDE SEQUENCE [LARGE SCALE GENOMIC DNA]</scope>
    <source>
        <strain>DSM 6242 / NBRC 107633 / OCM 468 / ACE-M</strain>
    </source>
</reference>
<comment type="function">
    <text evidence="1">Binds directly to 23S rRNA. Probably involved in E site tRNA release.</text>
</comment>
<comment type="function">
    <text evidence="1">Protein L1 is also a translational repressor protein, it controls the translation of its operon by binding to its mRNA.</text>
</comment>
<comment type="subunit">
    <text evidence="1">Part of the 50S ribosomal subunit.</text>
</comment>
<comment type="similarity">
    <text evidence="1">Belongs to the universal ribosomal protein uL1 family.</text>
</comment>
<name>RL1_METBU</name>
<feature type="chain" id="PRO_0000308145" description="Large ribosomal subunit protein uL1">
    <location>
        <begin position="1"/>
        <end position="213"/>
    </location>
</feature>
<organism>
    <name type="scientific">Methanococcoides burtonii (strain DSM 6242 / NBRC 107633 / OCM 468 / ACE-M)</name>
    <dbReference type="NCBI Taxonomy" id="259564"/>
    <lineage>
        <taxon>Archaea</taxon>
        <taxon>Methanobacteriati</taxon>
        <taxon>Methanobacteriota</taxon>
        <taxon>Stenosarchaea group</taxon>
        <taxon>Methanomicrobia</taxon>
        <taxon>Methanosarcinales</taxon>
        <taxon>Methanosarcinaceae</taxon>
        <taxon>Methanococcoides</taxon>
    </lineage>
</organism>
<protein>
    <recommendedName>
        <fullName evidence="1">Large ribosomal subunit protein uL1</fullName>
    </recommendedName>
    <alternativeName>
        <fullName evidence="2">50S ribosomal protein L1</fullName>
    </alternativeName>
</protein>
<keyword id="KW-0678">Repressor</keyword>
<keyword id="KW-0687">Ribonucleoprotein</keyword>
<keyword id="KW-0689">Ribosomal protein</keyword>
<keyword id="KW-0694">RNA-binding</keyword>
<keyword id="KW-0699">rRNA-binding</keyword>
<keyword id="KW-0810">Translation regulation</keyword>
<keyword id="KW-0820">tRNA-binding</keyword>
<dbReference type="EMBL" id="CP000300">
    <property type="protein sequence ID" value="ABE52827.1"/>
    <property type="molecule type" value="Genomic_DNA"/>
</dbReference>
<dbReference type="RefSeq" id="WP_011499969.1">
    <property type="nucleotide sequence ID" value="NC_007955.1"/>
</dbReference>
<dbReference type="SMR" id="Q12UP9"/>
<dbReference type="STRING" id="259564.Mbur_1946"/>
<dbReference type="GeneID" id="3997847"/>
<dbReference type="KEGG" id="mbu:Mbur_1946"/>
<dbReference type="HOGENOM" id="CLU_062853_4_0_2"/>
<dbReference type="OrthoDB" id="10382at2157"/>
<dbReference type="Proteomes" id="UP000001979">
    <property type="component" value="Chromosome"/>
</dbReference>
<dbReference type="GO" id="GO:0015934">
    <property type="term" value="C:large ribosomal subunit"/>
    <property type="evidence" value="ECO:0007669"/>
    <property type="project" value="InterPro"/>
</dbReference>
<dbReference type="GO" id="GO:0019843">
    <property type="term" value="F:rRNA binding"/>
    <property type="evidence" value="ECO:0007669"/>
    <property type="project" value="UniProtKB-UniRule"/>
</dbReference>
<dbReference type="GO" id="GO:0003735">
    <property type="term" value="F:structural constituent of ribosome"/>
    <property type="evidence" value="ECO:0007669"/>
    <property type="project" value="InterPro"/>
</dbReference>
<dbReference type="GO" id="GO:0000049">
    <property type="term" value="F:tRNA binding"/>
    <property type="evidence" value="ECO:0007669"/>
    <property type="project" value="UniProtKB-KW"/>
</dbReference>
<dbReference type="GO" id="GO:0006417">
    <property type="term" value="P:regulation of translation"/>
    <property type="evidence" value="ECO:0007669"/>
    <property type="project" value="UniProtKB-KW"/>
</dbReference>
<dbReference type="GO" id="GO:0006412">
    <property type="term" value="P:translation"/>
    <property type="evidence" value="ECO:0007669"/>
    <property type="project" value="UniProtKB-UniRule"/>
</dbReference>
<dbReference type="CDD" id="cd00403">
    <property type="entry name" value="Ribosomal_L1"/>
    <property type="match status" value="1"/>
</dbReference>
<dbReference type="FunFam" id="3.40.50.790:FF:000005">
    <property type="entry name" value="50S ribosomal protein L1"/>
    <property type="match status" value="1"/>
</dbReference>
<dbReference type="Gene3D" id="3.30.190.20">
    <property type="match status" value="1"/>
</dbReference>
<dbReference type="Gene3D" id="3.40.50.790">
    <property type="match status" value="1"/>
</dbReference>
<dbReference type="HAMAP" id="MF_01318_A">
    <property type="entry name" value="Ribosomal_uL1_A"/>
    <property type="match status" value="1"/>
</dbReference>
<dbReference type="InterPro" id="IPR002143">
    <property type="entry name" value="Ribosomal_uL1"/>
</dbReference>
<dbReference type="InterPro" id="IPR023674">
    <property type="entry name" value="Ribosomal_uL1-like"/>
</dbReference>
<dbReference type="InterPro" id="IPR028364">
    <property type="entry name" value="Ribosomal_uL1/biogenesis"/>
</dbReference>
<dbReference type="InterPro" id="IPR016095">
    <property type="entry name" value="Ribosomal_uL1_3-a/b-sand"/>
</dbReference>
<dbReference type="InterPro" id="IPR023669">
    <property type="entry name" value="Ribosomal_uL1_arc"/>
</dbReference>
<dbReference type="InterPro" id="IPR023673">
    <property type="entry name" value="Ribosomal_uL1_CS"/>
</dbReference>
<dbReference type="NCBIfam" id="NF003244">
    <property type="entry name" value="PRK04203.1"/>
    <property type="match status" value="1"/>
</dbReference>
<dbReference type="PANTHER" id="PTHR36427">
    <property type="entry name" value="54S RIBOSOMAL PROTEIN L1, MITOCHONDRIAL"/>
    <property type="match status" value="1"/>
</dbReference>
<dbReference type="PANTHER" id="PTHR36427:SF3">
    <property type="entry name" value="LARGE RIBOSOMAL SUBUNIT PROTEIN UL1M"/>
    <property type="match status" value="1"/>
</dbReference>
<dbReference type="Pfam" id="PF00687">
    <property type="entry name" value="Ribosomal_L1"/>
    <property type="match status" value="1"/>
</dbReference>
<dbReference type="PIRSF" id="PIRSF002155">
    <property type="entry name" value="Ribosomal_L1"/>
    <property type="match status" value="1"/>
</dbReference>
<dbReference type="SUPFAM" id="SSF56808">
    <property type="entry name" value="Ribosomal protein L1"/>
    <property type="match status" value="1"/>
</dbReference>
<dbReference type="PROSITE" id="PS01199">
    <property type="entry name" value="RIBOSOMAL_L1"/>
    <property type="match status" value="1"/>
</dbReference>
<gene>
    <name evidence="1" type="primary">rpl1</name>
    <name type="ordered locus">Mbur_1946</name>
</gene>
<sequence>MVEETTLDLVKQLIEGSPERKFSESLDIAINLKNLDMSQPKNRVDEEIILPNGLGKTMKIAVFAKGEVGLNAKDAGCDYILTEEDIKELGEDKSKARSLANECDFFIAEVQYMAQIGKALGAILGPRGKMPVPLTPDKNVADLINSTKNSVRIRSKDKLTFHVSVGRRDMDVEKLAENIETVLGRLEHSLEKGKHNLKSVYVTTTMGNSVRLV</sequence>
<proteinExistence type="inferred from homology"/>